<proteinExistence type="inferred from homology"/>
<dbReference type="EMBL" id="CR378679">
    <property type="protein sequence ID" value="CAG23384.1"/>
    <property type="molecule type" value="Genomic_DNA"/>
</dbReference>
<dbReference type="RefSeq" id="WP_011221545.1">
    <property type="nucleotide sequence ID" value="NC_006371.1"/>
</dbReference>
<dbReference type="SMR" id="Q6LH46"/>
<dbReference type="STRING" id="298386.PBPRB1518"/>
<dbReference type="KEGG" id="ppr:PBPRB1518"/>
<dbReference type="eggNOG" id="COG2137">
    <property type="taxonomic scope" value="Bacteria"/>
</dbReference>
<dbReference type="HOGENOM" id="CLU_1034051_0_0_6"/>
<dbReference type="Proteomes" id="UP000000593">
    <property type="component" value="Chromosome 2"/>
</dbReference>
<dbReference type="GO" id="GO:0005737">
    <property type="term" value="C:cytoplasm"/>
    <property type="evidence" value="ECO:0007669"/>
    <property type="project" value="UniProtKB-SubCell"/>
</dbReference>
<dbReference type="GO" id="GO:0006282">
    <property type="term" value="P:regulation of DNA repair"/>
    <property type="evidence" value="ECO:0007669"/>
    <property type="project" value="UniProtKB-UniRule"/>
</dbReference>
<dbReference type="Gene3D" id="1.10.10.10">
    <property type="entry name" value="Winged helix-like DNA-binding domain superfamily/Winged helix DNA-binding domain"/>
    <property type="match status" value="3"/>
</dbReference>
<dbReference type="HAMAP" id="MF_01114">
    <property type="entry name" value="RecX"/>
    <property type="match status" value="1"/>
</dbReference>
<dbReference type="InterPro" id="IPR053924">
    <property type="entry name" value="RecX_HTH_2nd"/>
</dbReference>
<dbReference type="InterPro" id="IPR053925">
    <property type="entry name" value="RecX_HTH_3rd"/>
</dbReference>
<dbReference type="InterPro" id="IPR003783">
    <property type="entry name" value="Regulatory_RecX"/>
</dbReference>
<dbReference type="InterPro" id="IPR036388">
    <property type="entry name" value="WH-like_DNA-bd_sf"/>
</dbReference>
<dbReference type="PANTHER" id="PTHR33602">
    <property type="entry name" value="REGULATORY PROTEIN RECX FAMILY PROTEIN"/>
    <property type="match status" value="1"/>
</dbReference>
<dbReference type="PANTHER" id="PTHR33602:SF1">
    <property type="entry name" value="REGULATORY PROTEIN RECX FAMILY PROTEIN"/>
    <property type="match status" value="1"/>
</dbReference>
<dbReference type="Pfam" id="PF02631">
    <property type="entry name" value="RecX_HTH2"/>
    <property type="match status" value="1"/>
</dbReference>
<dbReference type="Pfam" id="PF21981">
    <property type="entry name" value="RecX_HTH3"/>
    <property type="match status" value="1"/>
</dbReference>
<keyword id="KW-0963">Cytoplasm</keyword>
<keyword id="KW-1185">Reference proteome</keyword>
<sequence>MFSEYKSTKKAGPKPAQKVEQVYEYAVWWLNQRGYSVSKLKEKLTRKTDNPEWIASVIEKLLDQGYLSDQRFAETFVQSRCRLYGPKVLTQKLKLQGVGTTDIEHALCTINDSDTDELISRVIAKYSGKKSIRDITMRLKSEGIDDTRIQSVLSSNIDTEHESQLATRIINKHAKKMGRSGLLQKLRSEGISQDTIDELFSEESKDDVIEDDQHKALEQLNKKYKTSLTDFAEKKKATAFLVRKGFSFSEANYAIEHHLEDL</sequence>
<comment type="function">
    <text evidence="1">Modulates RecA activity.</text>
</comment>
<comment type="subcellular location">
    <subcellularLocation>
        <location evidence="1">Cytoplasm</location>
    </subcellularLocation>
</comment>
<comment type="similarity">
    <text evidence="1">Belongs to the RecX family.</text>
</comment>
<reference key="1">
    <citation type="journal article" date="2005" name="Science">
        <title>Life at depth: Photobacterium profundum genome sequence and expression analysis.</title>
        <authorList>
            <person name="Vezzi A."/>
            <person name="Campanaro S."/>
            <person name="D'Angelo M."/>
            <person name="Simonato F."/>
            <person name="Vitulo N."/>
            <person name="Lauro F.M."/>
            <person name="Cestaro A."/>
            <person name="Malacrida G."/>
            <person name="Simionati B."/>
            <person name="Cannata N."/>
            <person name="Romualdi C."/>
            <person name="Bartlett D.H."/>
            <person name="Valle G."/>
        </authorList>
    </citation>
    <scope>NUCLEOTIDE SEQUENCE [LARGE SCALE GENOMIC DNA]</scope>
    <source>
        <strain>ATCC BAA-1253 / SS9</strain>
    </source>
</reference>
<protein>
    <recommendedName>
        <fullName evidence="1">Regulatory protein RecX</fullName>
    </recommendedName>
</protein>
<organism>
    <name type="scientific">Photobacterium profundum (strain SS9)</name>
    <dbReference type="NCBI Taxonomy" id="298386"/>
    <lineage>
        <taxon>Bacteria</taxon>
        <taxon>Pseudomonadati</taxon>
        <taxon>Pseudomonadota</taxon>
        <taxon>Gammaproteobacteria</taxon>
        <taxon>Vibrionales</taxon>
        <taxon>Vibrionaceae</taxon>
        <taxon>Photobacterium</taxon>
    </lineage>
</organism>
<feature type="chain" id="PRO_1000137181" description="Regulatory protein RecX">
    <location>
        <begin position="1"/>
        <end position="262"/>
    </location>
</feature>
<gene>
    <name evidence="1" type="primary">recX</name>
    <name type="ordered locus">PBPRB1518</name>
</gene>
<accession>Q6LH46</accession>
<name>RECX_PHOPR</name>
<evidence type="ECO:0000255" key="1">
    <source>
        <dbReference type="HAMAP-Rule" id="MF_01114"/>
    </source>
</evidence>